<gene>
    <name type="primary">yaiX</name>
    <name type="synonym">yaiF</name>
    <name type="ordered locus">b4579</name>
    <name type="ordered locus">JW0350/JW5814</name>
    <name type="ORF">b0359</name>
    <name type="ORF">b0362</name>
</gene>
<accession>P75697</accession>
<accession>P75698</accession>
<accession>Q2MC63</accession>
<name>YAIX_ECOLI</name>
<evidence type="ECO:0000305" key="1"/>
<reference key="1">
    <citation type="journal article" date="1997" name="Science">
        <title>The complete genome sequence of Escherichia coli K-12.</title>
        <authorList>
            <person name="Blattner F.R."/>
            <person name="Plunkett G. III"/>
            <person name="Bloch C.A."/>
            <person name="Perna N.T."/>
            <person name="Burland V."/>
            <person name="Riley M."/>
            <person name="Collado-Vides J."/>
            <person name="Glasner J.D."/>
            <person name="Rode C.K."/>
            <person name="Mayhew G.F."/>
            <person name="Gregor J."/>
            <person name="Davis N.W."/>
            <person name="Kirkpatrick H.A."/>
            <person name="Goeden M.A."/>
            <person name="Rose D.J."/>
            <person name="Mau B."/>
            <person name="Shao Y."/>
        </authorList>
    </citation>
    <scope>NUCLEOTIDE SEQUENCE [LARGE SCALE GENOMIC DNA]</scope>
    <source>
        <strain>K12 / MG1655 / ATCC 47076</strain>
    </source>
</reference>
<reference key="2">
    <citation type="journal article" date="2006" name="Mol. Syst. Biol.">
        <title>Highly accurate genome sequences of Escherichia coli K-12 strains MG1655 and W3110.</title>
        <authorList>
            <person name="Hayashi K."/>
            <person name="Morooka N."/>
            <person name="Yamamoto Y."/>
            <person name="Fujita K."/>
            <person name="Isono K."/>
            <person name="Choi S."/>
            <person name="Ohtsubo E."/>
            <person name="Baba T."/>
            <person name="Wanner B.L."/>
            <person name="Mori H."/>
            <person name="Horiuchi T."/>
        </authorList>
    </citation>
    <scope>NUCLEOTIDE SEQUENCE [LARGE SCALE GENOMIC DNA]</scope>
    <source>
        <strain>K12 / W3110 / ATCC 27325 / DSM 5911</strain>
    </source>
</reference>
<feature type="chain" id="PRO_0000270205" description="Putative uncharacterized acetyltransferase YaiX">
    <location>
        <begin position="1"/>
        <end position="230"/>
    </location>
</feature>
<protein>
    <recommendedName>
        <fullName>Putative uncharacterized acetyltransferase YaiX</fullName>
        <ecNumber>2.3.1.-</ecNumber>
    </recommendedName>
</protein>
<organism>
    <name type="scientific">Escherichia coli (strain K12)</name>
    <dbReference type="NCBI Taxonomy" id="83333"/>
    <lineage>
        <taxon>Bacteria</taxon>
        <taxon>Pseudomonadati</taxon>
        <taxon>Pseudomonadota</taxon>
        <taxon>Gammaproteobacteria</taxon>
        <taxon>Enterobacterales</taxon>
        <taxon>Enterobacteriaceae</taxon>
        <taxon>Escherichia</taxon>
    </lineage>
</organism>
<sequence length="230" mass="24932">MDLLPFLLDANLSATNPPAIPHWWKRQPLIPNLLSQELKNYLKLNVKEKNIQIADQVIIDETAGEVVIGANTRICHGAVIQGPVVIGANCLIGNYAFIRPGTIISNGVKIGFATEIKNAVIEAEATIGPQCFIADSVVANQAYLGAQVRTSNHRLDEQPVSVRTPEGIIATGCDKLGCYIGQRSRLGVQVIILPGRIISPNTQLGPRVIVERNLPTGTYSLRQELIRTGD</sequence>
<comment type="similarity">
    <text evidence="1">Belongs to the transferase hexapeptide repeat family.</text>
</comment>
<comment type="caution">
    <text evidence="1">Could be the product of a pseudogene. The sequence shown here is interrupted by a IS2A insertion sequence.</text>
</comment>
<proteinExistence type="uncertain"/>
<dbReference type="EC" id="2.3.1.-"/>
<dbReference type="EMBL" id="U00096">
    <property type="status" value="NOT_ANNOTATED_CDS"/>
    <property type="molecule type" value="Genomic_DNA"/>
</dbReference>
<dbReference type="EMBL" id="AP009048">
    <property type="protein sequence ID" value="BAE76143.1"/>
    <property type="status" value="ALT_SEQ"/>
    <property type="molecule type" value="Genomic_DNA"/>
</dbReference>
<dbReference type="PIR" id="B64764">
    <property type="entry name" value="B64764"/>
</dbReference>
<dbReference type="PIR" id="G64763">
    <property type="entry name" value="G64763"/>
</dbReference>
<dbReference type="SMR" id="P75697"/>
<dbReference type="BioGRID" id="4261810">
    <property type="interactions" value="37"/>
</dbReference>
<dbReference type="DIP" id="DIP-28093N"/>
<dbReference type="FunCoup" id="P75697">
    <property type="interactions" value="41"/>
</dbReference>
<dbReference type="IntAct" id="P75697">
    <property type="interactions" value="3"/>
</dbReference>
<dbReference type="KEGG" id="ecj:JW5814"/>
<dbReference type="HOGENOM" id="CLU_129204_2_0_6"/>
<dbReference type="InParanoid" id="P75697"/>
<dbReference type="PhylomeDB" id="P75697"/>
<dbReference type="Proteomes" id="UP000000625">
    <property type="component" value="Chromosome"/>
</dbReference>
<dbReference type="GO" id="GO:0016746">
    <property type="term" value="F:acyltransferase activity"/>
    <property type="evidence" value="ECO:0007669"/>
    <property type="project" value="UniProtKB-KW"/>
</dbReference>
<dbReference type="GO" id="GO:0016779">
    <property type="term" value="F:nucleotidyltransferase activity"/>
    <property type="evidence" value="ECO:0007669"/>
    <property type="project" value="UniProtKB-ARBA"/>
</dbReference>
<dbReference type="Gene3D" id="2.160.10.10">
    <property type="entry name" value="Hexapeptide repeat proteins"/>
    <property type="match status" value="1"/>
</dbReference>
<dbReference type="InterPro" id="IPR050065">
    <property type="entry name" value="GlmU-like"/>
</dbReference>
<dbReference type="InterPro" id="IPR001451">
    <property type="entry name" value="Hexapep"/>
</dbReference>
<dbReference type="InterPro" id="IPR011004">
    <property type="entry name" value="Trimer_LpxA-like_sf"/>
</dbReference>
<dbReference type="PANTHER" id="PTHR43584:SF8">
    <property type="entry name" value="N-ACETYLMURAMATE ALPHA-1-PHOSPHATE URIDYLYLTRANSFERASE"/>
    <property type="match status" value="1"/>
</dbReference>
<dbReference type="PANTHER" id="PTHR43584">
    <property type="entry name" value="NUCLEOTIDYL TRANSFERASE"/>
    <property type="match status" value="1"/>
</dbReference>
<dbReference type="Pfam" id="PF00132">
    <property type="entry name" value="Hexapep"/>
    <property type="match status" value="1"/>
</dbReference>
<dbReference type="SUPFAM" id="SSF51161">
    <property type="entry name" value="Trimeric LpxA-like enzymes"/>
    <property type="match status" value="1"/>
</dbReference>
<keyword id="KW-0012">Acyltransferase</keyword>
<keyword id="KW-1185">Reference proteome</keyword>
<keyword id="KW-0677">Repeat</keyword>
<keyword id="KW-0808">Transferase</keyword>